<protein>
    <recommendedName>
        <fullName evidence="1">dTTP/UTP pyrophosphatase</fullName>
        <shortName evidence="1">dTTPase/UTPase</shortName>
        <ecNumber evidence="1">3.6.1.9</ecNumber>
    </recommendedName>
    <alternativeName>
        <fullName evidence="1">Nucleoside triphosphate pyrophosphatase</fullName>
    </alternativeName>
    <alternativeName>
        <fullName evidence="1">Nucleotide pyrophosphatase</fullName>
        <shortName evidence="1">Nucleotide PPase</shortName>
    </alternativeName>
</protein>
<comment type="function">
    <text evidence="1">Nucleoside triphosphate pyrophosphatase that hydrolyzes dTTP and UTP. May have a dual role in cell division arrest and in preventing the incorporation of modified nucleotides into cellular nucleic acids.</text>
</comment>
<comment type="catalytic activity">
    <reaction evidence="1">
        <text>dTTP + H2O = dTMP + diphosphate + H(+)</text>
        <dbReference type="Rhea" id="RHEA:28534"/>
        <dbReference type="ChEBI" id="CHEBI:15377"/>
        <dbReference type="ChEBI" id="CHEBI:15378"/>
        <dbReference type="ChEBI" id="CHEBI:33019"/>
        <dbReference type="ChEBI" id="CHEBI:37568"/>
        <dbReference type="ChEBI" id="CHEBI:63528"/>
        <dbReference type="EC" id="3.6.1.9"/>
    </reaction>
</comment>
<comment type="catalytic activity">
    <reaction evidence="1">
        <text>UTP + H2O = UMP + diphosphate + H(+)</text>
        <dbReference type="Rhea" id="RHEA:29395"/>
        <dbReference type="ChEBI" id="CHEBI:15377"/>
        <dbReference type="ChEBI" id="CHEBI:15378"/>
        <dbReference type="ChEBI" id="CHEBI:33019"/>
        <dbReference type="ChEBI" id="CHEBI:46398"/>
        <dbReference type="ChEBI" id="CHEBI:57865"/>
        <dbReference type="EC" id="3.6.1.9"/>
    </reaction>
</comment>
<comment type="cofactor">
    <cofactor evidence="1">
        <name>a divalent metal cation</name>
        <dbReference type="ChEBI" id="CHEBI:60240"/>
    </cofactor>
</comment>
<comment type="subcellular location">
    <subcellularLocation>
        <location evidence="1">Cytoplasm</location>
    </subcellularLocation>
</comment>
<comment type="similarity">
    <text evidence="1">Belongs to the Maf family. YhdE subfamily.</text>
</comment>
<proteinExistence type="inferred from homology"/>
<accession>Q2IRX7</accession>
<name>NTPPA_RHOP2</name>
<organism>
    <name type="scientific">Rhodopseudomonas palustris (strain HaA2)</name>
    <dbReference type="NCBI Taxonomy" id="316058"/>
    <lineage>
        <taxon>Bacteria</taxon>
        <taxon>Pseudomonadati</taxon>
        <taxon>Pseudomonadota</taxon>
        <taxon>Alphaproteobacteria</taxon>
        <taxon>Hyphomicrobiales</taxon>
        <taxon>Nitrobacteraceae</taxon>
        <taxon>Rhodopseudomonas</taxon>
    </lineage>
</organism>
<dbReference type="EC" id="3.6.1.9" evidence="1"/>
<dbReference type="EMBL" id="CP000250">
    <property type="protein sequence ID" value="ABD09033.1"/>
    <property type="molecule type" value="Genomic_DNA"/>
</dbReference>
<dbReference type="RefSeq" id="WP_011443217.1">
    <property type="nucleotide sequence ID" value="NC_007778.1"/>
</dbReference>
<dbReference type="SMR" id="Q2IRX7"/>
<dbReference type="STRING" id="316058.RPB_4346"/>
<dbReference type="KEGG" id="rpb:RPB_4346"/>
<dbReference type="eggNOG" id="COG0424">
    <property type="taxonomic scope" value="Bacteria"/>
</dbReference>
<dbReference type="HOGENOM" id="CLU_040416_2_0_5"/>
<dbReference type="OrthoDB" id="9807767at2"/>
<dbReference type="Proteomes" id="UP000008809">
    <property type="component" value="Chromosome"/>
</dbReference>
<dbReference type="GO" id="GO:0005737">
    <property type="term" value="C:cytoplasm"/>
    <property type="evidence" value="ECO:0007669"/>
    <property type="project" value="UniProtKB-SubCell"/>
</dbReference>
<dbReference type="GO" id="GO:0036218">
    <property type="term" value="F:dTTP diphosphatase activity"/>
    <property type="evidence" value="ECO:0007669"/>
    <property type="project" value="RHEA"/>
</dbReference>
<dbReference type="GO" id="GO:0036221">
    <property type="term" value="F:UTP diphosphatase activity"/>
    <property type="evidence" value="ECO:0007669"/>
    <property type="project" value="RHEA"/>
</dbReference>
<dbReference type="GO" id="GO:0009117">
    <property type="term" value="P:nucleotide metabolic process"/>
    <property type="evidence" value="ECO:0007669"/>
    <property type="project" value="UniProtKB-KW"/>
</dbReference>
<dbReference type="CDD" id="cd00555">
    <property type="entry name" value="Maf"/>
    <property type="match status" value="1"/>
</dbReference>
<dbReference type="FunFam" id="3.90.950.10:FF:000005">
    <property type="entry name" value="7-methyl-GTP pyrophosphatase"/>
    <property type="match status" value="1"/>
</dbReference>
<dbReference type="Gene3D" id="3.90.950.10">
    <property type="match status" value="1"/>
</dbReference>
<dbReference type="HAMAP" id="MF_00528">
    <property type="entry name" value="Maf"/>
    <property type="match status" value="1"/>
</dbReference>
<dbReference type="InterPro" id="IPR029001">
    <property type="entry name" value="ITPase-like_fam"/>
</dbReference>
<dbReference type="InterPro" id="IPR003697">
    <property type="entry name" value="Maf-like"/>
</dbReference>
<dbReference type="NCBIfam" id="TIGR00172">
    <property type="entry name" value="maf"/>
    <property type="match status" value="1"/>
</dbReference>
<dbReference type="NCBIfam" id="NF002401">
    <property type="entry name" value="PRK01441.1"/>
    <property type="match status" value="1"/>
</dbReference>
<dbReference type="PANTHER" id="PTHR43213">
    <property type="entry name" value="BIFUNCTIONAL DTTP/UTP PYROPHOSPHATASE/METHYLTRANSFERASE PROTEIN-RELATED"/>
    <property type="match status" value="1"/>
</dbReference>
<dbReference type="PANTHER" id="PTHR43213:SF5">
    <property type="entry name" value="BIFUNCTIONAL DTTP_UTP PYROPHOSPHATASE_METHYLTRANSFERASE PROTEIN-RELATED"/>
    <property type="match status" value="1"/>
</dbReference>
<dbReference type="Pfam" id="PF02545">
    <property type="entry name" value="Maf"/>
    <property type="match status" value="1"/>
</dbReference>
<dbReference type="PIRSF" id="PIRSF006305">
    <property type="entry name" value="Maf"/>
    <property type="match status" value="1"/>
</dbReference>
<dbReference type="SUPFAM" id="SSF52972">
    <property type="entry name" value="ITPase-like"/>
    <property type="match status" value="1"/>
</dbReference>
<feature type="chain" id="PRO_0000267407" description="dTTP/UTP pyrophosphatase">
    <location>
        <begin position="1"/>
        <end position="207"/>
    </location>
</feature>
<feature type="active site" description="Proton acceptor" evidence="1">
    <location>
        <position position="79"/>
    </location>
</feature>
<feature type="site" description="Important for substrate specificity" evidence="1">
    <location>
        <position position="15"/>
    </location>
</feature>
<feature type="site" description="Important for substrate specificity" evidence="1">
    <location>
        <position position="80"/>
    </location>
</feature>
<feature type="site" description="Important for substrate specificity" evidence="1">
    <location>
        <position position="163"/>
    </location>
</feature>
<gene>
    <name type="ordered locus">RPB_4346</name>
</gene>
<reference key="1">
    <citation type="submission" date="2006-01" db="EMBL/GenBank/DDBJ databases">
        <title>Complete sequence of Rhodopseudomonas palustris HaA2.</title>
        <authorList>
            <consortium name="US DOE Joint Genome Institute"/>
            <person name="Copeland A."/>
            <person name="Lucas S."/>
            <person name="Lapidus A."/>
            <person name="Barry K."/>
            <person name="Detter J.C."/>
            <person name="Glavina T."/>
            <person name="Hammon N."/>
            <person name="Israni S."/>
            <person name="Pitluck S."/>
            <person name="Chain P."/>
            <person name="Malfatti S."/>
            <person name="Shin M."/>
            <person name="Vergez L."/>
            <person name="Schmutz J."/>
            <person name="Larimer F."/>
            <person name="Land M."/>
            <person name="Hauser L."/>
            <person name="Pelletier D.A."/>
            <person name="Kyrpides N."/>
            <person name="Anderson I."/>
            <person name="Oda Y."/>
            <person name="Harwood C.S."/>
            <person name="Richardson P."/>
        </authorList>
    </citation>
    <scope>NUCLEOTIDE SEQUENCE [LARGE SCALE GENOMIC DNA]</scope>
    <source>
        <strain>HaA2</strain>
    </source>
</reference>
<keyword id="KW-0963">Cytoplasm</keyword>
<keyword id="KW-0378">Hydrolase</keyword>
<keyword id="KW-0546">Nucleotide metabolism</keyword>
<keyword id="KW-1185">Reference proteome</keyword>
<evidence type="ECO:0000255" key="1">
    <source>
        <dbReference type="HAMAP-Rule" id="MF_00528"/>
    </source>
</evidence>
<sequence>MLGRPKLVLASGSPRRLALLNQAGIEPDALRPADVDETPTKGELPRACANRLARAKAEAALKSVQLDDDLRGAFLLAADTVVAVGRRILPKAELVDEASQCLRLLSGRNHRVYTAVCLVTPKGSFRQRLIETKVRFKRLSEEDIDGYVASGEWRGKAGGYAVQGIAGSFVVKIVGSYTNIVGLPLYETTSLLGGEGYPIRFGWLNAS</sequence>